<evidence type="ECO:0000305" key="1"/>
<organism>
    <name type="scientific">Homo sapiens</name>
    <name type="common">Human</name>
    <dbReference type="NCBI Taxonomy" id="9606"/>
    <lineage>
        <taxon>Eukaryota</taxon>
        <taxon>Metazoa</taxon>
        <taxon>Chordata</taxon>
        <taxon>Craniata</taxon>
        <taxon>Vertebrata</taxon>
        <taxon>Euteleostomi</taxon>
        <taxon>Mammalia</taxon>
        <taxon>Eutheria</taxon>
        <taxon>Euarchontoglires</taxon>
        <taxon>Primates</taxon>
        <taxon>Haplorrhini</taxon>
        <taxon>Catarrhini</taxon>
        <taxon>Hominidae</taxon>
        <taxon>Homo</taxon>
    </lineage>
</organism>
<dbReference type="EMBL" id="AY035382">
    <property type="protein sequence ID" value="AAK60446.1"/>
    <property type="molecule type" value="mRNA"/>
</dbReference>
<dbReference type="EMBL" id="AY035383">
    <property type="protein sequence ID" value="AAK60447.1"/>
    <property type="molecule type" value="mRNA"/>
</dbReference>
<dbReference type="BioMuta" id="HGNC:1283"/>
<dbReference type="ProteomicsDB" id="57086"/>
<dbReference type="AGR" id="HGNC:1283"/>
<dbReference type="GeneCards" id="LINC00158"/>
<dbReference type="HGNC" id="HGNC:1283">
    <property type="gene designation" value="LINC00158"/>
</dbReference>
<dbReference type="neXtProt" id="NX_P58513"/>
<dbReference type="InParanoid" id="P58513"/>
<dbReference type="PAN-GO" id="P58513">
    <property type="GO annotations" value="0 GO annotations based on evolutionary models"/>
</dbReference>
<dbReference type="PathwayCommons" id="P58513"/>
<dbReference type="ChiTaRS" id="LINC00158">
    <property type="organism name" value="human"/>
</dbReference>
<dbReference type="Pharos" id="P58513">
    <property type="development level" value="Tdark"/>
</dbReference>
<dbReference type="Proteomes" id="UP000005640">
    <property type="component" value="Unplaced"/>
</dbReference>
<dbReference type="RNAct" id="P58513">
    <property type="molecule type" value="protein"/>
</dbReference>
<proteinExistence type="uncertain"/>
<sequence length="81" mass="9586">MFSLFIENRYLHLLHALSLVTDVSRIQSHFGTLPRIKDEHRSHQESKYHFGGHVQIRFGSDQDWRQGHQSFLLKTGPCKKR</sequence>
<comment type="tissue specificity">
    <text>Expressed in fetal brain.</text>
</comment>
<comment type="caution">
    <text evidence="1">Product of a dubious CDS prediction. Probable non-coding RNA.</text>
</comment>
<feature type="chain" id="PRO_0000079514" description="Putative uncharacterized protein encoded by LINC00158">
    <location>
        <begin position="1"/>
        <end position="81"/>
    </location>
</feature>
<accession>P58513</accession>
<reference key="1">
    <citation type="journal article" date="2001" name="Genomics">
        <title>From PREDs and open reading frames to cDNA isolation: revisiting the human chromosome 21 transcription map.</title>
        <authorList>
            <person name="Reymond A."/>
            <person name="Friedli M."/>
            <person name="Neergaard Henrichsen C."/>
            <person name="Chapot F."/>
            <person name="Deutsch S."/>
            <person name="Ucla C."/>
            <person name="Rossier C."/>
            <person name="Lyle R."/>
            <person name="Guipponi M."/>
            <person name="Antonarakis S.E."/>
        </authorList>
    </citation>
    <scope>NUCLEOTIDE SEQUENCE [MRNA]</scope>
</reference>
<protein>
    <recommendedName>
        <fullName>Putative uncharacterized protein encoded by LINC00158</fullName>
    </recommendedName>
</protein>
<gene>
    <name type="primary">LINC00158</name>
    <name type="synonym">C21orf42</name>
    <name type="synonym">NCRNA00158</name>
</gene>
<name>CU042_HUMAN</name>
<keyword id="KW-1185">Reference proteome</keyword>